<evidence type="ECO:0000255" key="1">
    <source>
        <dbReference type="HAMAP-Rule" id="MF_01812"/>
    </source>
</evidence>
<evidence type="ECO:0000269" key="2">
    <source>
    </source>
</evidence>
<evidence type="ECO:0000269" key="3">
    <source>
    </source>
</evidence>
<evidence type="ECO:0000312" key="4">
    <source>
        <dbReference type="EMBL" id="ABQ74211.1"/>
    </source>
</evidence>
<dbReference type="EC" id="2.3.1.-" evidence="1 2"/>
<dbReference type="EMBL" id="CP000611">
    <property type="protein sequence ID" value="ABQ74211.1"/>
    <property type="molecule type" value="Genomic_DNA"/>
</dbReference>
<dbReference type="SMR" id="A5U5B1"/>
<dbReference type="KEGG" id="mra:MRA_2442"/>
<dbReference type="eggNOG" id="COG4552">
    <property type="taxonomic scope" value="Bacteria"/>
</dbReference>
<dbReference type="HOGENOM" id="CLU_050659_0_0_11"/>
<dbReference type="Proteomes" id="UP000001988">
    <property type="component" value="Chromosome"/>
</dbReference>
<dbReference type="GO" id="GO:0097691">
    <property type="term" value="C:bacterial extracellular vesicle"/>
    <property type="evidence" value="ECO:0007669"/>
    <property type="project" value="UniProtKB-SubCell"/>
</dbReference>
<dbReference type="GO" id="GO:0044161">
    <property type="term" value="C:host cell cytoplasmic vesicle"/>
    <property type="evidence" value="ECO:0007669"/>
    <property type="project" value="UniProtKB-SubCell"/>
</dbReference>
<dbReference type="GO" id="GO:0043655">
    <property type="term" value="C:host extracellular space"/>
    <property type="evidence" value="ECO:0007669"/>
    <property type="project" value="UniProtKB-SubCell"/>
</dbReference>
<dbReference type="GO" id="GO:0034069">
    <property type="term" value="F:aminoglycoside N-acetyltransferase activity"/>
    <property type="evidence" value="ECO:0007669"/>
    <property type="project" value="TreeGrafter"/>
</dbReference>
<dbReference type="GO" id="GO:0061733">
    <property type="term" value="F:protein-lysine-acetyltransferase activity"/>
    <property type="evidence" value="ECO:0007669"/>
    <property type="project" value="RHEA"/>
</dbReference>
<dbReference type="GO" id="GO:0030649">
    <property type="term" value="P:aminoglycoside antibiotic catabolic process"/>
    <property type="evidence" value="ECO:0007669"/>
    <property type="project" value="TreeGrafter"/>
</dbReference>
<dbReference type="CDD" id="cd04301">
    <property type="entry name" value="NAT_SF"/>
    <property type="match status" value="1"/>
</dbReference>
<dbReference type="FunFam" id="3.30.1050.10:FF:000008">
    <property type="entry name" value="N-acetyltransferase Eis"/>
    <property type="match status" value="1"/>
</dbReference>
<dbReference type="FunFam" id="3.40.630.30:FF:000112">
    <property type="entry name" value="N-acetyltransferase Eis"/>
    <property type="match status" value="1"/>
</dbReference>
<dbReference type="Gene3D" id="3.40.630.30">
    <property type="match status" value="2"/>
</dbReference>
<dbReference type="Gene3D" id="3.30.1050.10">
    <property type="entry name" value="SCP2 sterol-binding domain"/>
    <property type="match status" value="1"/>
</dbReference>
<dbReference type="HAMAP" id="MF_01812">
    <property type="entry name" value="Eis"/>
    <property type="match status" value="1"/>
</dbReference>
<dbReference type="InterPro" id="IPR041380">
    <property type="entry name" value="Acetyltransf_17"/>
</dbReference>
<dbReference type="InterPro" id="IPR051554">
    <property type="entry name" value="Acetyltransferase_Eis"/>
</dbReference>
<dbReference type="InterPro" id="IPR016181">
    <property type="entry name" value="Acyl_CoA_acyltransferase"/>
</dbReference>
<dbReference type="InterPro" id="IPR025559">
    <property type="entry name" value="Eis_dom"/>
</dbReference>
<dbReference type="InterPro" id="IPR000182">
    <property type="entry name" value="GNAT_dom"/>
</dbReference>
<dbReference type="InterPro" id="IPR022902">
    <property type="entry name" value="NAcTrfase_Eis"/>
</dbReference>
<dbReference type="InterPro" id="IPR036527">
    <property type="entry name" value="SCP2_sterol-bd_dom_sf"/>
</dbReference>
<dbReference type="NCBIfam" id="NF002364">
    <property type="entry name" value="PRK01346.1-1"/>
    <property type="match status" value="1"/>
</dbReference>
<dbReference type="NCBIfam" id="NF002367">
    <property type="entry name" value="PRK01346.1-4"/>
    <property type="match status" value="1"/>
</dbReference>
<dbReference type="PANTHER" id="PTHR37817">
    <property type="entry name" value="N-ACETYLTRANSFERASE EIS"/>
    <property type="match status" value="1"/>
</dbReference>
<dbReference type="PANTHER" id="PTHR37817:SF1">
    <property type="entry name" value="N-ACETYLTRANSFERASE EIS"/>
    <property type="match status" value="1"/>
</dbReference>
<dbReference type="Pfam" id="PF17668">
    <property type="entry name" value="Acetyltransf_17"/>
    <property type="match status" value="1"/>
</dbReference>
<dbReference type="Pfam" id="PF13527">
    <property type="entry name" value="Acetyltransf_9"/>
    <property type="match status" value="1"/>
</dbReference>
<dbReference type="Pfam" id="PF13530">
    <property type="entry name" value="SCP2_2"/>
    <property type="match status" value="1"/>
</dbReference>
<dbReference type="SUPFAM" id="SSF55729">
    <property type="entry name" value="Acyl-CoA N-acyltransferases (Nat)"/>
    <property type="match status" value="1"/>
</dbReference>
<dbReference type="SUPFAM" id="SSF55718">
    <property type="entry name" value="SCP-like"/>
    <property type="match status" value="1"/>
</dbReference>
<dbReference type="PROSITE" id="PS51186">
    <property type="entry name" value="GNAT"/>
    <property type="match status" value="1"/>
</dbReference>
<gene>
    <name evidence="1" type="primary">eis</name>
    <name evidence="4" type="ordered locus">MRA_2442</name>
</gene>
<organism>
    <name type="scientific">Mycobacterium tuberculosis (strain ATCC 25177 / H37Ra)</name>
    <dbReference type="NCBI Taxonomy" id="419947"/>
    <lineage>
        <taxon>Bacteria</taxon>
        <taxon>Bacillati</taxon>
        <taxon>Actinomycetota</taxon>
        <taxon>Actinomycetes</taxon>
        <taxon>Mycobacteriales</taxon>
        <taxon>Mycobacteriaceae</taxon>
        <taxon>Mycobacterium</taxon>
        <taxon>Mycobacterium tuberculosis complex</taxon>
    </lineage>
</organism>
<name>EIS_MYCTA</name>
<protein>
    <recommendedName>
        <fullName evidence="1">N-acetyltransferase Eis</fullName>
        <ecNumber evidence="1 2">2.3.1.-</ecNumber>
    </recommendedName>
    <alternativeName>
        <fullName evidence="1">Enhanced intracellular survival protein</fullName>
    </alternativeName>
    <alternativeName>
        <fullName evidence="1">Protein-lysine N-acetyltransferase</fullName>
    </alternativeName>
</protein>
<accession>A5U5B1</accession>
<comment type="function">
    <text evidence="1">Effector that is released into the host cell and affects host immune responses. Acts as an acetyltransferase that acetylates lysine residues of host proteins.</text>
</comment>
<comment type="function">
    <text evidence="2 3">Probably acetylates endogenous DNA-binding protein HU homolog (HupB) in vivo; overexpression (in M.smegmatis) leads to nucleoid decompaction, possibly via acetylation of HupB (PubMed:26817737). Also succinylates HupB (PubMed:34224344).</text>
</comment>
<comment type="catalytic activity">
    <reaction evidence="1 2 3">
        <text>L-lysyl-[protein] + acetyl-CoA = N(6)-acetyl-L-lysyl-[protein] + CoA + H(+)</text>
        <dbReference type="Rhea" id="RHEA:45948"/>
        <dbReference type="Rhea" id="RHEA-COMP:9752"/>
        <dbReference type="Rhea" id="RHEA-COMP:10731"/>
        <dbReference type="ChEBI" id="CHEBI:15378"/>
        <dbReference type="ChEBI" id="CHEBI:29969"/>
        <dbReference type="ChEBI" id="CHEBI:57287"/>
        <dbReference type="ChEBI" id="CHEBI:57288"/>
        <dbReference type="ChEBI" id="CHEBI:61930"/>
    </reaction>
</comment>
<comment type="catalytic activity">
    <reaction evidence="3">
        <text>succinyl-CoA + L-lysyl-[protein] = N(6)-succinyl-L-lysyl-[protein] + CoA + H(+)</text>
        <dbReference type="Rhea" id="RHEA:16261"/>
        <dbReference type="Rhea" id="RHEA-COMP:9752"/>
        <dbReference type="Rhea" id="RHEA-COMP:11877"/>
        <dbReference type="ChEBI" id="CHEBI:15378"/>
        <dbReference type="ChEBI" id="CHEBI:29969"/>
        <dbReference type="ChEBI" id="CHEBI:57287"/>
        <dbReference type="ChEBI" id="CHEBI:57292"/>
        <dbReference type="ChEBI" id="CHEBI:87830"/>
    </reaction>
</comment>
<comment type="biophysicochemical properties">
    <kinetics>
        <KM evidence="2">2.4 uM for acetylation of HupB (28 degrees Celsius pH 8.0)</KM>
        <KM evidence="3">1.05 uM for acetylation of HupB (25 degrees Celsius pH 8.0)</KM>
        <KM evidence="3">0.29 uM for succinylation of HupB (25 degrees Celsius pH 8.0)</KM>
        <text evidence="3">kcat is 1.91 sec(-1) for acetylation and 2.43 sec(-1) for succinylation of HupB.</text>
    </kinetics>
</comment>
<comment type="subunit">
    <text evidence="1 2 3">Homohexamer; trimer of dimers (By similarity). Interacts with DNA-binding protein HU homolog (HupB) (PubMed:26817737, PubMed:34224344).</text>
</comment>
<comment type="subcellular location">
    <subcellularLocation>
        <location evidence="1">Secreted</location>
    </subcellularLocation>
    <subcellularLocation>
        <location evidence="1">Host cytoplasmic vesicle</location>
        <location evidence="1">Host phagosome</location>
    </subcellularLocation>
    <subcellularLocation>
        <location evidence="1">Extracellular vesicle</location>
        <location evidence="1">Bacterial extracellular vesicle</location>
    </subcellularLocation>
    <subcellularLocation>
        <location evidence="1">Host extracellular space</location>
    </subcellularLocation>
</comment>
<comment type="similarity">
    <text evidence="1">Belongs to the acetyltransferase Eis family.</text>
</comment>
<sequence length="402" mass="43804">MTVTLCSPTEDDWPGMFLLAAASFTDFIGPESATAWRTLVPTDGAVVVRDGAGPGSEVVGMALYMDLRLTVPGEVVLPTAGLSFVAVAPTHRRRGLLRAMCAELHRRIADSGYPVAALHASEGGIYGRFGYGPATTLHELTVDRRFARFHADAPGGGLGGSSVRLVRPTEHRGEFEAIYERWRQQVPGGLLRPQVLWDELLAECKAAPGGDRESFALLHPDGYALYRVDRTDLKLARVSELRAVTADAHCALWRALIGLDSMERISIITHPQDPLPHLLTDTRLARTTWRQDGLWLRIMNVPAALEARGYAHEVGEFSTVLEVSDGGRFALKIGDGRARCTPTDAAAEIEMDRDVLGSLYLGAHRASTLAAANRLRTKDSQLLRRLDAAFASDVPVQTAFEF</sequence>
<feature type="chain" id="PRO_0000458843" description="N-acetyltransferase Eis">
    <location>
        <begin position="1"/>
        <end position="402"/>
    </location>
</feature>
<feature type="domain" description="N-acetyltransferase" evidence="1">
    <location>
        <begin position="3"/>
        <end position="154"/>
    </location>
</feature>
<feature type="active site" description="Proton donor" evidence="1">
    <location>
        <position position="126"/>
    </location>
</feature>
<feature type="active site" description="Proton acceptor; via carboxylate" evidence="1">
    <location>
        <position position="402"/>
    </location>
</feature>
<feature type="binding site" evidence="1">
    <location>
        <begin position="85"/>
        <end position="87"/>
    </location>
    <ligand>
        <name>acetyl-CoA</name>
        <dbReference type="ChEBI" id="CHEBI:57288"/>
    </ligand>
</feature>
<feature type="binding site" evidence="1">
    <location>
        <begin position="93"/>
        <end position="98"/>
    </location>
    <ligand>
        <name>acetyl-CoA</name>
        <dbReference type="ChEBI" id="CHEBI:57288"/>
    </ligand>
</feature>
<feature type="binding site" evidence="1">
    <location>
        <begin position="121"/>
        <end position="122"/>
    </location>
    <ligand>
        <name>acetyl-CoA</name>
        <dbReference type="ChEBI" id="CHEBI:57288"/>
    </ligand>
</feature>
<reference evidence="4" key="1">
    <citation type="journal article" date="2008" name="PLoS ONE">
        <title>Genetic basis of virulence attenuation revealed by comparative genomic analysis of Mycobacterium tuberculosis strain H37Ra versus H37Rv.</title>
        <authorList>
            <person name="Zheng H."/>
            <person name="Lu L."/>
            <person name="Wang B."/>
            <person name="Pu S."/>
            <person name="Zhang X."/>
            <person name="Zhu G."/>
            <person name="Shi W."/>
            <person name="Zhang L."/>
            <person name="Wang H."/>
            <person name="Wang S."/>
            <person name="Zhao G."/>
            <person name="Zhang Y."/>
        </authorList>
    </citation>
    <scope>NUCLEOTIDE SEQUENCE [LARGE SCALE GENOMIC DNA]</scope>
    <source>
        <strain>ATCC 25177 / H37Ra</strain>
    </source>
</reference>
<reference key="2">
    <citation type="journal article" date="2016" name="Mol. Microbiol.">
        <title>Lysine acetylation of the Mycobacterium tuberculosis HU protein modulates its DNA binding and genome organization.</title>
        <authorList>
            <person name="Ghosh S."/>
            <person name="Padmanabhan B."/>
            <person name="Anand C."/>
            <person name="Nagaraja V."/>
        </authorList>
    </citation>
    <scope>ACETYLTRANSFERASE ACTIVITY ON HUPB</scope>
    <scope>CATALYTIC ACTIVITY</scope>
    <scope>BIOPHYSICOCHEMICAL PROPERTIES</scope>
    <scope>INTERACTION WITH HUPB</scope>
    <source>
        <strain>ATCC 25177 / H37Ra</strain>
    </source>
</reference>
<reference key="3">
    <citation type="journal article" date="2021" name="Microbiology">
        <title>Rv0802c is an acyltransferase that succinylates and acetylates Mycobacterium tuberculosis nucleoid-associated protein HU.</title>
        <authorList>
            <person name="Anand C."/>
            <person name="Santoshi M."/>
            <person name="Singh P.R."/>
            <person name="Nagaraja V."/>
        </authorList>
    </citation>
    <scope>FUNCTION</scope>
    <scope>CATALYTIC ACTIVITY</scope>
    <scope>BIOPHYSICOCHEMICAL PROPERTIES</scope>
    <scope>INTERACTION WITH HUPB</scope>
    <source>
        <strain>ATCC 25177 / H37Ra</strain>
    </source>
</reference>
<proteinExistence type="evidence at protein level"/>
<keyword id="KW-0012">Acyltransferase</keyword>
<keyword id="KW-1036">Host cytoplasmic vesicle</keyword>
<keyword id="KW-1185">Reference proteome</keyword>
<keyword id="KW-0964">Secreted</keyword>
<keyword id="KW-0808">Transferase</keyword>